<sequence>MGPPPGAGVSCRGGCGFSRLLAWCFLLALSPQAPGSRGAEAVWTAYLNVSWRVPHTGVNRTVWELSEEGVYGQDSPLEPVAGVLVPPDGPGALNACNPHTNFTVPTVWGSTVQVSWLALIQRGGGCTFADKIHLAYERGASGAVIFNFPGTRNEVIPMSHPGAVDIVAIMIGNLKGTKILQSIQRGIQVTMVIEVGKKHGPWVNHYSIFFVSVSFFIITAATVGYFIFYSARRLRNARAQSRKQRQLKADAKKAIGRLQLRTLKQGDKEIGPDGDSCAVCIELYKPNDLVRILTCNHIFHKTCVDPWLLEHRTCPMCKCDILKALGIEVDVEDGSVSLQVPVSNEISNSASSHEEDNRSETASSGYASVQGTDEPPLEEHVQSTNESLQLVNHEANSVAVDVIPHVDNPTFEEDETPNQETAVREIKS</sequence>
<comment type="function">
    <text evidence="5 6 7 8 9 10 11">E3 ubiquitin-protein ligase that catalyzes 'Lys-27', 'Lys-48'- or 'Lys-63'-linked polyubiquitin chains formation and plays a role in different biological processes such as modulation of immune response, cytoskeletal dynamics or protein homeostasis. Inhibits IL2 and IL4 transcription, thereby playing an important role in the induction of the anergic phenotype, a long-term stable state of T-lymphocyte unresponsiveness to antigenic stimulation associated with the blockade of interleukin production (PubMed:12705856). Ubiquitinates ARPC5 with 'Lys-48' linkages and COR1A with 'Lys-63' linkages leading to their degradation, down-regulation of these cytoskeletal components results in impaired lamellipodium formation and reduced accumulation of F-actin at the immunological synapse (PubMed:22016387). Functions in the patterning of the dorsal ectoderm; sensitizes ectoderm to respond to neural-inducing signals. Plays a positive role in innate immune response by promoting 'Lys-63'-linked ubiquitination of TBK1 after RNA- or DNA-virus infection (PubMed:27776110). Regulates alveolar macrophage activation and neutrophil infiltration by interacting with TLR4, targeting it for degradation, and inhibiting NF-kappa-B activation, hence decreasing pro-inflammatory cytokines (PubMed:37344492). Negatively regulates the IL-3/STAT5 signaling pathway by facilitating 'Lys-27'-linked polyubiquitination of IL3RA leading to its degradation via lysosomal pathway (PubMed:38702781). Directly regulates the N-glycosylation process in the endoplasmic reticulum by targeting the glycosyl-transferase RPN1 for ubiquitination and degradation (PubMed:39567208). Other substrates targeted for degradation by RNF128 include transmembrane proteins CD40L, CD83 or the tetraspanin CD151 (PubMed:18713730, PubMed:19542455).</text>
</comment>
<comment type="catalytic activity">
    <reaction evidence="5">
        <text>S-ubiquitinyl-[E2 ubiquitin-conjugating enzyme]-L-cysteine + [acceptor protein]-L-lysine = [E2 ubiquitin-conjugating enzyme]-L-cysteine + N(6)-ubiquitinyl-[acceptor protein]-L-lysine.</text>
        <dbReference type="EC" id="2.3.2.27"/>
    </reaction>
</comment>
<comment type="pathway">
    <text>Protein modification; protein ubiquitination.</text>
</comment>
<comment type="interaction">
    <interactant intactId="EBI-2341619">
        <id>Q8TEB7</id>
    </interactant>
    <interactant intactId="EBI-743771">
        <id>Q92624</id>
        <label>APPBP2</label>
    </interactant>
    <organismsDiffer>false</organismsDiffer>
    <experiments>3</experiments>
</comment>
<comment type="interaction">
    <interactant intactId="EBI-2341619">
        <id>Q8TEB7</id>
    </interactant>
    <interactant intactId="EBI-742887">
        <id>Q8TAP6</id>
        <label>CEP76</label>
    </interactant>
    <organismsDiffer>false</organismsDiffer>
    <experiments>6</experiments>
</comment>
<comment type="interaction">
    <interactant intactId="EBI-2341619">
        <id>Q8TEB7</id>
    </interactant>
    <interactant intactId="EBI-1752620">
        <id>Q15036</id>
        <label>SNX17</label>
    </interactant>
    <organismsDiffer>false</organismsDiffer>
    <experiments>3</experiments>
</comment>
<comment type="interaction">
    <interactant intactId="EBI-2341619">
        <id>Q8TEB7</id>
    </interactant>
    <interactant intactId="EBI-947187">
        <id>Q9UHD9</id>
        <label>UBQLN2</label>
    </interactant>
    <organismsDiffer>false</organismsDiffer>
    <experiments>3</experiments>
</comment>
<comment type="subcellular location">
    <subcellularLocation>
        <location evidence="6 8 11">Cytoplasm</location>
    </subcellularLocation>
    <subcellularLocation>
        <location evidence="1">Endomembrane system</location>
        <topology evidence="1">Single-pass membrane protein</topology>
    </subcellularLocation>
    <subcellularLocation>
        <location evidence="5 8">Cytoplasm</location>
        <location evidence="5 8">Cytoskeleton</location>
    </subcellularLocation>
    <subcellularLocation>
        <location evidence="1">Cytoplasm</location>
        <location evidence="1">Perinuclear region</location>
    </subcellularLocation>
    <text evidence="1">Localized in an asymmetric perinuclear punctate manner. Localizes to the internal pool of the transferrin recycling endosomal pathway. Partially colocalized with the endoplasmic reticulum resident HSPA5, with Golgi resident STX5, and with the late endosomal GTPase RAB7A (By similarity).</text>
</comment>
<comment type="alternative products">
    <event type="alternative splicing"/>
    <isoform>
        <id>Q8TEB7-1</id>
        <name>1</name>
        <sequence type="displayed"/>
    </isoform>
    <isoform>
        <id>Q8TEB7-2</id>
        <name>2</name>
        <sequence type="described" ref="VSP_021685"/>
    </isoform>
</comment>
<comment type="induction">
    <text evidence="5 9">Induced under anergic conditions. Up-regulated during T-cell anergy induction following signaling through the T-cell antigen receptor (PubMed:12705856). Upon viral infection (PubMed:27776110).</text>
</comment>
<comment type="domain">
    <text>Binding to E2 ubiquitin-conjugating enzyme requires an intact RING finger domain.</text>
</comment>
<comment type="PTM">
    <text>Auto-ubiquitinated. Controls the development of T-cell clonal anergy by ubiquitination.</text>
</comment>
<comment type="sequence caution" evidence="14">
    <conflict type="frameshift">
        <sequence resource="EMBL-CDS" id="BAB15682"/>
    </conflict>
</comment>
<keyword id="KW-0002">3D-structure</keyword>
<keyword id="KW-0025">Alternative splicing</keyword>
<keyword id="KW-0963">Cytoplasm</keyword>
<keyword id="KW-0206">Cytoskeleton</keyword>
<keyword id="KW-0325">Glycoprotein</keyword>
<keyword id="KW-0472">Membrane</keyword>
<keyword id="KW-0479">Metal-binding</keyword>
<keyword id="KW-1267">Proteomics identification</keyword>
<keyword id="KW-1185">Reference proteome</keyword>
<keyword id="KW-0732">Signal</keyword>
<keyword id="KW-0808">Transferase</keyword>
<keyword id="KW-0812">Transmembrane</keyword>
<keyword id="KW-1133">Transmembrane helix</keyword>
<keyword id="KW-0832">Ubl conjugation</keyword>
<keyword id="KW-0833">Ubl conjugation pathway</keyword>
<keyword id="KW-0862">Zinc</keyword>
<keyword id="KW-0863">Zinc-finger</keyword>
<reference key="1">
    <citation type="journal article" date="2003" name="Immunity">
        <title>GRAIL: an E3 ubiquitin ligase that inhibits cytokine gene transcription is expressed in anergic CD4+ T cells.</title>
        <authorList>
            <person name="Anandasabapathy N."/>
            <person name="Ford G.S."/>
            <person name="Bloom D."/>
            <person name="Holness C."/>
            <person name="Paragas V."/>
            <person name="Seroogy C."/>
            <person name="Skrenta H."/>
            <person name="Hollenhorst M."/>
            <person name="Fathman C.G."/>
            <person name="Soares L."/>
        </authorList>
    </citation>
    <scope>NUCLEOTIDE SEQUENCE [MRNA] (ISOFORM 1)</scope>
    <scope>FUNCTION</scope>
    <scope>SUBCELLULAR LOCATION</scope>
    <scope>INDUCTION</scope>
    <scope>MUTAGENESIS</scope>
    <scope>CATALYTIC ACTIVITY</scope>
</reference>
<reference key="2">
    <citation type="journal article" date="2004" name="Nat. Genet.">
        <title>Complete sequencing and characterization of 21,243 full-length human cDNAs.</title>
        <authorList>
            <person name="Ota T."/>
            <person name="Suzuki Y."/>
            <person name="Nishikawa T."/>
            <person name="Otsuki T."/>
            <person name="Sugiyama T."/>
            <person name="Irie R."/>
            <person name="Wakamatsu A."/>
            <person name="Hayashi K."/>
            <person name="Sato H."/>
            <person name="Nagai K."/>
            <person name="Kimura K."/>
            <person name="Makita H."/>
            <person name="Sekine M."/>
            <person name="Obayashi M."/>
            <person name="Nishi T."/>
            <person name="Shibahara T."/>
            <person name="Tanaka T."/>
            <person name="Ishii S."/>
            <person name="Yamamoto J."/>
            <person name="Saito K."/>
            <person name="Kawai Y."/>
            <person name="Isono Y."/>
            <person name="Nakamura Y."/>
            <person name="Nagahari K."/>
            <person name="Murakami K."/>
            <person name="Yasuda T."/>
            <person name="Iwayanagi T."/>
            <person name="Wagatsuma M."/>
            <person name="Shiratori A."/>
            <person name="Sudo H."/>
            <person name="Hosoiri T."/>
            <person name="Kaku Y."/>
            <person name="Kodaira H."/>
            <person name="Kondo H."/>
            <person name="Sugawara M."/>
            <person name="Takahashi M."/>
            <person name="Kanda K."/>
            <person name="Yokoi T."/>
            <person name="Furuya T."/>
            <person name="Kikkawa E."/>
            <person name="Omura Y."/>
            <person name="Abe K."/>
            <person name="Kamihara K."/>
            <person name="Katsuta N."/>
            <person name="Sato K."/>
            <person name="Tanikawa M."/>
            <person name="Yamazaki M."/>
            <person name="Ninomiya K."/>
            <person name="Ishibashi T."/>
            <person name="Yamashita H."/>
            <person name="Murakawa K."/>
            <person name="Fujimori K."/>
            <person name="Tanai H."/>
            <person name="Kimata M."/>
            <person name="Watanabe M."/>
            <person name="Hiraoka S."/>
            <person name="Chiba Y."/>
            <person name="Ishida S."/>
            <person name="Ono Y."/>
            <person name="Takiguchi S."/>
            <person name="Watanabe S."/>
            <person name="Yosida M."/>
            <person name="Hotuta T."/>
            <person name="Kusano J."/>
            <person name="Kanehori K."/>
            <person name="Takahashi-Fujii A."/>
            <person name="Hara H."/>
            <person name="Tanase T.-O."/>
            <person name="Nomura Y."/>
            <person name="Togiya S."/>
            <person name="Komai F."/>
            <person name="Hara R."/>
            <person name="Takeuchi K."/>
            <person name="Arita M."/>
            <person name="Imose N."/>
            <person name="Musashino K."/>
            <person name="Yuuki H."/>
            <person name="Oshima A."/>
            <person name="Sasaki N."/>
            <person name="Aotsuka S."/>
            <person name="Yoshikawa Y."/>
            <person name="Matsunawa H."/>
            <person name="Ichihara T."/>
            <person name="Shiohata N."/>
            <person name="Sano S."/>
            <person name="Moriya S."/>
            <person name="Momiyama H."/>
            <person name="Satoh N."/>
            <person name="Takami S."/>
            <person name="Terashima Y."/>
            <person name="Suzuki O."/>
            <person name="Nakagawa S."/>
            <person name="Senoh A."/>
            <person name="Mizoguchi H."/>
            <person name="Goto Y."/>
            <person name="Shimizu F."/>
            <person name="Wakebe H."/>
            <person name="Hishigaki H."/>
            <person name="Watanabe T."/>
            <person name="Sugiyama A."/>
            <person name="Takemoto M."/>
            <person name="Kawakami B."/>
            <person name="Yamazaki M."/>
            <person name="Watanabe K."/>
            <person name="Kumagai A."/>
            <person name="Itakura S."/>
            <person name="Fukuzumi Y."/>
            <person name="Fujimori Y."/>
            <person name="Komiyama M."/>
            <person name="Tashiro H."/>
            <person name="Tanigami A."/>
            <person name="Fujiwara T."/>
            <person name="Ono T."/>
            <person name="Yamada K."/>
            <person name="Fujii Y."/>
            <person name="Ozaki K."/>
            <person name="Hirao M."/>
            <person name="Ohmori Y."/>
            <person name="Kawabata A."/>
            <person name="Hikiji T."/>
            <person name="Kobatake N."/>
            <person name="Inagaki H."/>
            <person name="Ikema Y."/>
            <person name="Okamoto S."/>
            <person name="Okitani R."/>
            <person name="Kawakami T."/>
            <person name="Noguchi S."/>
            <person name="Itoh T."/>
            <person name="Shigeta K."/>
            <person name="Senba T."/>
            <person name="Matsumura K."/>
            <person name="Nakajima Y."/>
            <person name="Mizuno T."/>
            <person name="Morinaga M."/>
            <person name="Sasaki M."/>
            <person name="Togashi T."/>
            <person name="Oyama M."/>
            <person name="Hata H."/>
            <person name="Watanabe M."/>
            <person name="Komatsu T."/>
            <person name="Mizushima-Sugano J."/>
            <person name="Satoh T."/>
            <person name="Shirai Y."/>
            <person name="Takahashi Y."/>
            <person name="Nakagawa K."/>
            <person name="Okumura K."/>
            <person name="Nagase T."/>
            <person name="Nomura N."/>
            <person name="Kikuchi H."/>
            <person name="Masuho Y."/>
            <person name="Yamashita R."/>
            <person name="Nakai K."/>
            <person name="Yada T."/>
            <person name="Nakamura Y."/>
            <person name="Ohara O."/>
            <person name="Isogai T."/>
            <person name="Sugano S."/>
        </authorList>
    </citation>
    <scope>NUCLEOTIDE SEQUENCE [LARGE SCALE MRNA] (ISOFORMS 1 AND 2)</scope>
    <source>
        <tissue>Hepatoma</tissue>
        <tissue>Lung</tissue>
        <tissue>Mammary gland</tissue>
    </source>
</reference>
<reference key="3">
    <citation type="journal article" date="2005" name="Nature">
        <title>The DNA sequence of the human X chromosome.</title>
        <authorList>
            <person name="Ross M.T."/>
            <person name="Grafham D.V."/>
            <person name="Coffey A.J."/>
            <person name="Scherer S."/>
            <person name="McLay K."/>
            <person name="Muzny D."/>
            <person name="Platzer M."/>
            <person name="Howell G.R."/>
            <person name="Burrows C."/>
            <person name="Bird C.P."/>
            <person name="Frankish A."/>
            <person name="Lovell F.L."/>
            <person name="Howe K.L."/>
            <person name="Ashurst J.L."/>
            <person name="Fulton R.S."/>
            <person name="Sudbrak R."/>
            <person name="Wen G."/>
            <person name="Jones M.C."/>
            <person name="Hurles M.E."/>
            <person name="Andrews T.D."/>
            <person name="Scott C.E."/>
            <person name="Searle S."/>
            <person name="Ramser J."/>
            <person name="Whittaker A."/>
            <person name="Deadman R."/>
            <person name="Carter N.P."/>
            <person name="Hunt S.E."/>
            <person name="Chen R."/>
            <person name="Cree A."/>
            <person name="Gunaratne P."/>
            <person name="Havlak P."/>
            <person name="Hodgson A."/>
            <person name="Metzker M.L."/>
            <person name="Richards S."/>
            <person name="Scott G."/>
            <person name="Steffen D."/>
            <person name="Sodergren E."/>
            <person name="Wheeler D.A."/>
            <person name="Worley K.C."/>
            <person name="Ainscough R."/>
            <person name="Ambrose K.D."/>
            <person name="Ansari-Lari M.A."/>
            <person name="Aradhya S."/>
            <person name="Ashwell R.I."/>
            <person name="Babbage A.K."/>
            <person name="Bagguley C.L."/>
            <person name="Ballabio A."/>
            <person name="Banerjee R."/>
            <person name="Barker G.E."/>
            <person name="Barlow K.F."/>
            <person name="Barrett I.P."/>
            <person name="Bates K.N."/>
            <person name="Beare D.M."/>
            <person name="Beasley H."/>
            <person name="Beasley O."/>
            <person name="Beck A."/>
            <person name="Bethel G."/>
            <person name="Blechschmidt K."/>
            <person name="Brady N."/>
            <person name="Bray-Allen S."/>
            <person name="Bridgeman A.M."/>
            <person name="Brown A.J."/>
            <person name="Brown M.J."/>
            <person name="Bonnin D."/>
            <person name="Bruford E.A."/>
            <person name="Buhay C."/>
            <person name="Burch P."/>
            <person name="Burford D."/>
            <person name="Burgess J."/>
            <person name="Burrill W."/>
            <person name="Burton J."/>
            <person name="Bye J.M."/>
            <person name="Carder C."/>
            <person name="Carrel L."/>
            <person name="Chako J."/>
            <person name="Chapman J.C."/>
            <person name="Chavez D."/>
            <person name="Chen E."/>
            <person name="Chen G."/>
            <person name="Chen Y."/>
            <person name="Chen Z."/>
            <person name="Chinault C."/>
            <person name="Ciccodicola A."/>
            <person name="Clark S.Y."/>
            <person name="Clarke G."/>
            <person name="Clee C.M."/>
            <person name="Clegg S."/>
            <person name="Clerc-Blankenburg K."/>
            <person name="Clifford K."/>
            <person name="Cobley V."/>
            <person name="Cole C.G."/>
            <person name="Conquer J.S."/>
            <person name="Corby N."/>
            <person name="Connor R.E."/>
            <person name="David R."/>
            <person name="Davies J."/>
            <person name="Davis C."/>
            <person name="Davis J."/>
            <person name="Delgado O."/>
            <person name="Deshazo D."/>
            <person name="Dhami P."/>
            <person name="Ding Y."/>
            <person name="Dinh H."/>
            <person name="Dodsworth S."/>
            <person name="Draper H."/>
            <person name="Dugan-Rocha S."/>
            <person name="Dunham A."/>
            <person name="Dunn M."/>
            <person name="Durbin K.J."/>
            <person name="Dutta I."/>
            <person name="Eades T."/>
            <person name="Ellwood M."/>
            <person name="Emery-Cohen A."/>
            <person name="Errington H."/>
            <person name="Evans K.L."/>
            <person name="Faulkner L."/>
            <person name="Francis F."/>
            <person name="Frankland J."/>
            <person name="Fraser A.E."/>
            <person name="Galgoczy P."/>
            <person name="Gilbert J."/>
            <person name="Gill R."/>
            <person name="Gloeckner G."/>
            <person name="Gregory S.G."/>
            <person name="Gribble S."/>
            <person name="Griffiths C."/>
            <person name="Grocock R."/>
            <person name="Gu Y."/>
            <person name="Gwilliam R."/>
            <person name="Hamilton C."/>
            <person name="Hart E.A."/>
            <person name="Hawes A."/>
            <person name="Heath P.D."/>
            <person name="Heitmann K."/>
            <person name="Hennig S."/>
            <person name="Hernandez J."/>
            <person name="Hinzmann B."/>
            <person name="Ho S."/>
            <person name="Hoffs M."/>
            <person name="Howden P.J."/>
            <person name="Huckle E.J."/>
            <person name="Hume J."/>
            <person name="Hunt P.J."/>
            <person name="Hunt A.R."/>
            <person name="Isherwood J."/>
            <person name="Jacob L."/>
            <person name="Johnson D."/>
            <person name="Jones S."/>
            <person name="de Jong P.J."/>
            <person name="Joseph S.S."/>
            <person name="Keenan S."/>
            <person name="Kelly S."/>
            <person name="Kershaw J.K."/>
            <person name="Khan Z."/>
            <person name="Kioschis P."/>
            <person name="Klages S."/>
            <person name="Knights A.J."/>
            <person name="Kosiura A."/>
            <person name="Kovar-Smith C."/>
            <person name="Laird G.K."/>
            <person name="Langford C."/>
            <person name="Lawlor S."/>
            <person name="Leversha M."/>
            <person name="Lewis L."/>
            <person name="Liu W."/>
            <person name="Lloyd C."/>
            <person name="Lloyd D.M."/>
            <person name="Loulseged H."/>
            <person name="Loveland J.E."/>
            <person name="Lovell J.D."/>
            <person name="Lozado R."/>
            <person name="Lu J."/>
            <person name="Lyne R."/>
            <person name="Ma J."/>
            <person name="Maheshwari M."/>
            <person name="Matthews L.H."/>
            <person name="McDowall J."/>
            <person name="McLaren S."/>
            <person name="McMurray A."/>
            <person name="Meidl P."/>
            <person name="Meitinger T."/>
            <person name="Milne S."/>
            <person name="Miner G."/>
            <person name="Mistry S.L."/>
            <person name="Morgan M."/>
            <person name="Morris S."/>
            <person name="Mueller I."/>
            <person name="Mullikin J.C."/>
            <person name="Nguyen N."/>
            <person name="Nordsiek G."/>
            <person name="Nyakatura G."/>
            <person name="O'dell C.N."/>
            <person name="Okwuonu G."/>
            <person name="Palmer S."/>
            <person name="Pandian R."/>
            <person name="Parker D."/>
            <person name="Parrish J."/>
            <person name="Pasternak S."/>
            <person name="Patel D."/>
            <person name="Pearce A.V."/>
            <person name="Pearson D.M."/>
            <person name="Pelan S.E."/>
            <person name="Perez L."/>
            <person name="Porter K.M."/>
            <person name="Ramsey Y."/>
            <person name="Reichwald K."/>
            <person name="Rhodes S."/>
            <person name="Ridler K.A."/>
            <person name="Schlessinger D."/>
            <person name="Schueler M.G."/>
            <person name="Sehra H.K."/>
            <person name="Shaw-Smith C."/>
            <person name="Shen H."/>
            <person name="Sheridan E.M."/>
            <person name="Shownkeen R."/>
            <person name="Skuce C.D."/>
            <person name="Smith M.L."/>
            <person name="Sotheran E.C."/>
            <person name="Steingruber H.E."/>
            <person name="Steward C.A."/>
            <person name="Storey R."/>
            <person name="Swann R.M."/>
            <person name="Swarbreck D."/>
            <person name="Tabor P.E."/>
            <person name="Taudien S."/>
            <person name="Taylor T."/>
            <person name="Teague B."/>
            <person name="Thomas K."/>
            <person name="Thorpe A."/>
            <person name="Timms K."/>
            <person name="Tracey A."/>
            <person name="Trevanion S."/>
            <person name="Tromans A.C."/>
            <person name="d'Urso M."/>
            <person name="Verduzco D."/>
            <person name="Villasana D."/>
            <person name="Waldron L."/>
            <person name="Wall M."/>
            <person name="Wang Q."/>
            <person name="Warren J."/>
            <person name="Warry G.L."/>
            <person name="Wei X."/>
            <person name="West A."/>
            <person name="Whitehead S.L."/>
            <person name="Whiteley M.N."/>
            <person name="Wilkinson J.E."/>
            <person name="Willey D.L."/>
            <person name="Williams G."/>
            <person name="Williams L."/>
            <person name="Williamson A."/>
            <person name="Williamson H."/>
            <person name="Wilming L."/>
            <person name="Woodmansey R.L."/>
            <person name="Wray P.W."/>
            <person name="Yen J."/>
            <person name="Zhang J."/>
            <person name="Zhou J."/>
            <person name="Zoghbi H."/>
            <person name="Zorilla S."/>
            <person name="Buck D."/>
            <person name="Reinhardt R."/>
            <person name="Poustka A."/>
            <person name="Rosenthal A."/>
            <person name="Lehrach H."/>
            <person name="Meindl A."/>
            <person name="Minx P.J."/>
            <person name="Hillier L.W."/>
            <person name="Willard H.F."/>
            <person name="Wilson R.K."/>
            <person name="Waterston R.H."/>
            <person name="Rice C.M."/>
            <person name="Vaudin M."/>
            <person name="Coulson A."/>
            <person name="Nelson D.L."/>
            <person name="Weinstock G."/>
            <person name="Sulston J.E."/>
            <person name="Durbin R.M."/>
            <person name="Hubbard T."/>
            <person name="Gibbs R.A."/>
            <person name="Beck S."/>
            <person name="Rogers J."/>
            <person name="Bentley D.R."/>
        </authorList>
    </citation>
    <scope>NUCLEOTIDE SEQUENCE [LARGE SCALE GENOMIC DNA]</scope>
</reference>
<reference key="4">
    <citation type="journal article" date="2004" name="Genome Res.">
        <title>The status, quality, and expansion of the NIH full-length cDNA project: the Mammalian Gene Collection (MGC).</title>
        <authorList>
            <consortium name="The MGC Project Team"/>
        </authorList>
    </citation>
    <scope>NUCLEOTIDE SEQUENCE [LARGE SCALE MRNA] (ISOFORM 1)</scope>
    <source>
        <tissue>Brain</tissue>
    </source>
</reference>
<reference key="5">
    <citation type="journal article" date="2008" name="J. Biol. Chem.">
        <title>The single subunit transmembrane E3 ligase gene related to anergy in lymphocytes (GRAIL) captures and then ubiquitinates transmembrane proteins across the cell membrane.</title>
        <authorList>
            <person name="Lineberry N."/>
            <person name="Su L."/>
            <person name="Soares L."/>
            <person name="Fathman C.G."/>
        </authorList>
    </citation>
    <scope>FUNCTION</scope>
    <scope>SUBCELLULAR LOCATION</scope>
</reference>
<reference key="6">
    <citation type="journal article" date="2009" name="J. Immunol.">
        <title>The transmembrane E3 ligase GRAIL ubiquitinates and degrades CD83 on CD4 T cells.</title>
        <authorList>
            <person name="Su L.L."/>
            <person name="Iwai H."/>
            <person name="Lin J.T."/>
            <person name="Fathman C.G."/>
        </authorList>
    </citation>
    <scope>FUNCTION</scope>
</reference>
<reference key="7">
    <citation type="journal article" date="2011" name="J. Biol. Chem.">
        <title>GRAIL (gene related to anergy in lymphocytes) regulates cytoskeletal reorganization through ubiquitination and degradation of Arp2/3 subunit 5 and coronin 1A.</title>
        <authorList>
            <person name="Ichikawa D."/>
            <person name="Mizuno M."/>
            <person name="Yamamura T."/>
            <person name="Miyake S."/>
        </authorList>
    </citation>
    <scope>FUNCTION</scope>
    <scope>SUBCELLULAR LOCATION</scope>
</reference>
<reference key="8">
    <citation type="journal article" date="2016" name="Nat. Immunol.">
        <title>E3 ubiquitin ligase RNF128 promotes innate antiviral immunity through K63-linked ubiquitination of TBK1.</title>
        <authorList>
            <person name="Song G."/>
            <person name="Liu B."/>
            <person name="Li Z."/>
            <person name="Wu H."/>
            <person name="Wang P."/>
            <person name="Zhao K."/>
            <person name="Jiang G."/>
            <person name="Zhang L."/>
            <person name="Gao C."/>
        </authorList>
    </citation>
    <scope>FUNCTION</scope>
    <scope>INDUCTION BY VIRUS INFECTION</scope>
    <scope>SUBCELLULAR LOCATION</scope>
</reference>
<reference key="9">
    <citation type="journal article" date="2023" name="Cell Death Dis.">
        <title>RNF128 regulates neutrophil infiltration and myeloperoxidase functions to prevent acute lung injury.</title>
        <authorList>
            <person name="Liu P.Y."/>
            <person name="Chen C.Y."/>
            <person name="Lin Y.L."/>
            <person name="Lin C.M."/>
            <person name="Tsai W.C."/>
            <person name="Tsai Y.L."/>
            <person name="Lin G.J."/>
            <person name="Chen Y.G."/>
            <person name="Wang S.Y."/>
            <person name="Sun R.N."/>
            <person name="Huang Y.C."/>
            <person name="Chang H."/>
            <person name="Chen Y.C."/>
        </authorList>
    </citation>
    <scope>FUNCTION</scope>
</reference>
<reference key="10">
    <citation type="journal article" date="2024" name="Cell Commun. Signal.">
        <title>E3 ubiquitin ligase RNF128 negatively regulates the IL-3/STAT5 signaling pathway by facilitating K27-linked polyubiquitination of IL-3Ralpha.</title>
        <authorList>
            <person name="Yu J."/>
            <person name="Li J."/>
            <person name="Shen A."/>
            <person name="Liu Z."/>
            <person name="He T.S."/>
        </authorList>
    </citation>
    <scope>FUNCTION</scope>
    <scope>SUBCELLULAR LOCATION</scope>
</reference>
<reference key="11">
    <citation type="journal article" date="2024" name="BMB Rep.">
        <title>Transmembrane E3 ligase RNF128 regulates N-glycosylation by promoting ribophorin I ubiquitination and degradation.</title>
        <authorList>
            <person name="Cho E.B."/>
            <person name="Vu V.A."/>
            <person name="Park S.H."/>
            <person name="Trinh L.T."/>
            <person name="Yoon J.B."/>
            <person name="Kim S."/>
        </authorList>
    </citation>
    <scope>FUNCTION</scope>
</reference>
<reference key="12">
    <citation type="submission" date="2009-10" db="PDB data bank">
        <title>PA domain of the E3 ligase GRAIL.</title>
        <authorList>
            <consortium name="Structural genomics consortium (SGC)"/>
        </authorList>
    </citation>
    <scope>X-RAY CRYSTALLOGRAPHY (2.1 ANGSTROMS) OF 38-204</scope>
    <scope>GLYCOSYLATION AT ASN-101</scope>
</reference>
<name>RN128_HUMAN</name>
<dbReference type="EC" id="2.3.2.27" evidence="5"/>
<dbReference type="EMBL" id="AF394689">
    <property type="protein sequence ID" value="AAK77554.1"/>
    <property type="molecule type" value="mRNA"/>
</dbReference>
<dbReference type="EMBL" id="AK027169">
    <property type="protein sequence ID" value="BAB15682.1"/>
    <property type="status" value="ALT_FRAME"/>
    <property type="molecule type" value="mRNA"/>
</dbReference>
<dbReference type="EMBL" id="AK074264">
    <property type="protein sequence ID" value="BAB85033.1"/>
    <property type="molecule type" value="mRNA"/>
</dbReference>
<dbReference type="EMBL" id="AK126553">
    <property type="protein sequence ID" value="BAC86589.1"/>
    <property type="molecule type" value="mRNA"/>
</dbReference>
<dbReference type="EMBL" id="AL391315">
    <property type="status" value="NOT_ANNOTATED_CDS"/>
    <property type="molecule type" value="Genomic_DNA"/>
</dbReference>
<dbReference type="EMBL" id="AL606833">
    <property type="status" value="NOT_ANNOTATED_CDS"/>
    <property type="molecule type" value="Genomic_DNA"/>
</dbReference>
<dbReference type="EMBL" id="BC030951">
    <property type="protein sequence ID" value="AAH30951.1"/>
    <property type="molecule type" value="mRNA"/>
</dbReference>
<dbReference type="EMBL" id="BC056677">
    <property type="protein sequence ID" value="AAH56677.1"/>
    <property type="molecule type" value="mRNA"/>
</dbReference>
<dbReference type="EMBL" id="BC063404">
    <property type="protein sequence ID" value="AAH63404.1"/>
    <property type="molecule type" value="mRNA"/>
</dbReference>
<dbReference type="CCDS" id="CCDS14520.1">
    <molecule id="Q8TEB7-2"/>
</dbReference>
<dbReference type="CCDS" id="CCDS14521.1">
    <molecule id="Q8TEB7-1"/>
</dbReference>
<dbReference type="RefSeq" id="NP_078815.3">
    <molecule id="Q8TEB7-2"/>
    <property type="nucleotide sequence ID" value="NM_024539.3"/>
</dbReference>
<dbReference type="RefSeq" id="NP_919445.1">
    <molecule id="Q8TEB7-1"/>
    <property type="nucleotide sequence ID" value="NM_194463.2"/>
</dbReference>
<dbReference type="PDB" id="3ICU">
    <property type="method" value="X-ray"/>
    <property type="resolution" value="2.10 A"/>
    <property type="chains" value="A=38-204"/>
</dbReference>
<dbReference type="PDBsum" id="3ICU"/>
<dbReference type="SMR" id="Q8TEB7"/>
<dbReference type="BioGRID" id="122731">
    <property type="interactions" value="71"/>
</dbReference>
<dbReference type="CORUM" id="Q8TEB7"/>
<dbReference type="FunCoup" id="Q8TEB7">
    <property type="interactions" value="1065"/>
</dbReference>
<dbReference type="IntAct" id="Q8TEB7">
    <property type="interactions" value="10"/>
</dbReference>
<dbReference type="MINT" id="Q8TEB7"/>
<dbReference type="STRING" id="9606.ENSP00000255499"/>
<dbReference type="GlyCosmos" id="Q8TEB7">
    <property type="glycosylation" value="5 sites, 1 glycan"/>
</dbReference>
<dbReference type="GlyGen" id="Q8TEB7">
    <property type="glycosylation" value="5 sites, 1 N-linked glycan (1 site), 1 O-linked glycan (2 sites)"/>
</dbReference>
<dbReference type="iPTMnet" id="Q8TEB7"/>
<dbReference type="PhosphoSitePlus" id="Q8TEB7"/>
<dbReference type="BioMuta" id="RNF128"/>
<dbReference type="DMDM" id="74751443"/>
<dbReference type="jPOST" id="Q8TEB7"/>
<dbReference type="MassIVE" id="Q8TEB7"/>
<dbReference type="PaxDb" id="9606-ENSP00000255499"/>
<dbReference type="PeptideAtlas" id="Q8TEB7"/>
<dbReference type="ProteomicsDB" id="74439">
    <molecule id="Q8TEB7-1"/>
</dbReference>
<dbReference type="ProteomicsDB" id="74440">
    <molecule id="Q8TEB7-2"/>
</dbReference>
<dbReference type="Antibodypedia" id="15043">
    <property type="antibodies" value="143 antibodies from 26 providers"/>
</dbReference>
<dbReference type="DNASU" id="79589"/>
<dbReference type="Ensembl" id="ENST00000255499.3">
    <molecule id="Q8TEB7-1"/>
    <property type="protein sequence ID" value="ENSP00000255499.2"/>
    <property type="gene ID" value="ENSG00000133135.14"/>
</dbReference>
<dbReference type="Ensembl" id="ENST00000324342.7">
    <molecule id="Q8TEB7-2"/>
    <property type="protein sequence ID" value="ENSP00000316127.3"/>
    <property type="gene ID" value="ENSG00000133135.14"/>
</dbReference>
<dbReference type="GeneID" id="79589"/>
<dbReference type="KEGG" id="hsa:79589"/>
<dbReference type="MANE-Select" id="ENST00000255499.3">
    <property type="protein sequence ID" value="ENSP00000255499.2"/>
    <property type="RefSeq nucleotide sequence ID" value="NM_194463.2"/>
    <property type="RefSeq protein sequence ID" value="NP_919445.1"/>
</dbReference>
<dbReference type="UCSC" id="uc004emk.4">
    <molecule id="Q8TEB7-1"/>
    <property type="organism name" value="human"/>
</dbReference>
<dbReference type="AGR" id="HGNC:21153"/>
<dbReference type="CTD" id="79589"/>
<dbReference type="DisGeNET" id="79589"/>
<dbReference type="GeneCards" id="RNF128"/>
<dbReference type="HGNC" id="HGNC:21153">
    <property type="gene designation" value="RNF128"/>
</dbReference>
<dbReference type="HPA" id="ENSG00000133135">
    <property type="expression patterns" value="Tissue enhanced (intestine, liver)"/>
</dbReference>
<dbReference type="MalaCards" id="RNF128"/>
<dbReference type="MIM" id="300439">
    <property type="type" value="gene"/>
</dbReference>
<dbReference type="neXtProt" id="NX_Q8TEB7"/>
<dbReference type="OpenTargets" id="ENSG00000133135"/>
<dbReference type="PharmGKB" id="PA134868457"/>
<dbReference type="VEuPathDB" id="HostDB:ENSG00000133135"/>
<dbReference type="eggNOG" id="KOG4628">
    <property type="taxonomic scope" value="Eukaryota"/>
</dbReference>
<dbReference type="GeneTree" id="ENSGT00940000158347"/>
<dbReference type="HOGENOM" id="CLU_049885_0_0_1"/>
<dbReference type="InParanoid" id="Q8TEB7"/>
<dbReference type="OMA" id="NKSRFFW"/>
<dbReference type="OrthoDB" id="5357315at2759"/>
<dbReference type="PAN-GO" id="Q8TEB7">
    <property type="GO annotations" value="6 GO annotations based on evolutionary models"/>
</dbReference>
<dbReference type="PhylomeDB" id="Q8TEB7"/>
<dbReference type="TreeFam" id="TF317486"/>
<dbReference type="PathwayCommons" id="Q8TEB7"/>
<dbReference type="Reactome" id="R-HSA-5689880">
    <property type="pathway name" value="Ub-specific processing proteases"/>
</dbReference>
<dbReference type="Reactome" id="R-HSA-5689896">
    <property type="pathway name" value="Ovarian tumor domain proteases"/>
</dbReference>
<dbReference type="SignaLink" id="Q8TEB7"/>
<dbReference type="SIGNOR" id="Q8TEB7"/>
<dbReference type="UniPathway" id="UPA00143"/>
<dbReference type="BioGRID-ORCS" id="79589">
    <property type="hits" value="15 hits in 808 CRISPR screens"/>
</dbReference>
<dbReference type="ChiTaRS" id="RNF128">
    <property type="organism name" value="human"/>
</dbReference>
<dbReference type="EvolutionaryTrace" id="Q8TEB7"/>
<dbReference type="GeneWiki" id="RNF128"/>
<dbReference type="GenomeRNAi" id="79589"/>
<dbReference type="Pharos" id="Q8TEB7">
    <property type="development level" value="Tbio"/>
</dbReference>
<dbReference type="PRO" id="PR:Q8TEB7"/>
<dbReference type="Proteomes" id="UP000005640">
    <property type="component" value="Chromosome X"/>
</dbReference>
<dbReference type="RNAct" id="Q8TEB7">
    <property type="molecule type" value="protein"/>
</dbReference>
<dbReference type="Bgee" id="ENSG00000133135">
    <property type="expression patterns" value="Expressed in jejunal mucosa and 174 other cell types or tissues"/>
</dbReference>
<dbReference type="ExpressionAtlas" id="Q8TEB7">
    <property type="expression patterns" value="baseline and differential"/>
</dbReference>
<dbReference type="GO" id="GO:0005737">
    <property type="term" value="C:cytoplasm"/>
    <property type="evidence" value="ECO:0000318"/>
    <property type="project" value="GO_Central"/>
</dbReference>
<dbReference type="GO" id="GO:0005856">
    <property type="term" value="C:cytoskeleton"/>
    <property type="evidence" value="ECO:0007669"/>
    <property type="project" value="UniProtKB-SubCell"/>
</dbReference>
<dbReference type="GO" id="GO:0005829">
    <property type="term" value="C:cytosol"/>
    <property type="evidence" value="ECO:0000304"/>
    <property type="project" value="Reactome"/>
</dbReference>
<dbReference type="GO" id="GO:0005783">
    <property type="term" value="C:endoplasmic reticulum"/>
    <property type="evidence" value="ECO:0000318"/>
    <property type="project" value="GO_Central"/>
</dbReference>
<dbReference type="GO" id="GO:0005794">
    <property type="term" value="C:Golgi apparatus"/>
    <property type="evidence" value="ECO:0000318"/>
    <property type="project" value="GO_Central"/>
</dbReference>
<dbReference type="GO" id="GO:0005770">
    <property type="term" value="C:late endosome"/>
    <property type="evidence" value="ECO:0000318"/>
    <property type="project" value="GO_Central"/>
</dbReference>
<dbReference type="GO" id="GO:0016020">
    <property type="term" value="C:membrane"/>
    <property type="evidence" value="ECO:0007669"/>
    <property type="project" value="UniProtKB-KW"/>
</dbReference>
<dbReference type="GO" id="GO:0048471">
    <property type="term" value="C:perinuclear region of cytoplasm"/>
    <property type="evidence" value="ECO:0007669"/>
    <property type="project" value="UniProtKB-SubCell"/>
</dbReference>
<dbReference type="GO" id="GO:0061630">
    <property type="term" value="F:ubiquitin protein ligase activity"/>
    <property type="evidence" value="ECO:0000318"/>
    <property type="project" value="GO_Central"/>
</dbReference>
<dbReference type="GO" id="GO:0008270">
    <property type="term" value="F:zinc ion binding"/>
    <property type="evidence" value="ECO:0007669"/>
    <property type="project" value="UniProtKB-KW"/>
</dbReference>
<dbReference type="GO" id="GO:0001818">
    <property type="term" value="P:negative regulation of cytokine production"/>
    <property type="evidence" value="ECO:0007669"/>
    <property type="project" value="Ensembl"/>
</dbReference>
<dbReference type="GO" id="GO:1904352">
    <property type="term" value="P:positive regulation of protein catabolic process in the vacuole"/>
    <property type="evidence" value="ECO:0000305"/>
    <property type="project" value="BHF-UCL"/>
</dbReference>
<dbReference type="GO" id="GO:0061462">
    <property type="term" value="P:protein localization to lysosome"/>
    <property type="evidence" value="ECO:0000305"/>
    <property type="project" value="BHF-UCL"/>
</dbReference>
<dbReference type="GO" id="GO:0016567">
    <property type="term" value="P:protein ubiquitination"/>
    <property type="evidence" value="ECO:0007669"/>
    <property type="project" value="UniProtKB-UniPathway"/>
</dbReference>
<dbReference type="GO" id="GO:0031647">
    <property type="term" value="P:regulation of protein stability"/>
    <property type="evidence" value="ECO:0000315"/>
    <property type="project" value="BHF-UCL"/>
</dbReference>
<dbReference type="GO" id="GO:0006511">
    <property type="term" value="P:ubiquitin-dependent protein catabolic process"/>
    <property type="evidence" value="ECO:0000318"/>
    <property type="project" value="GO_Central"/>
</dbReference>
<dbReference type="CDD" id="cd02122">
    <property type="entry name" value="PA_GRAIL_like"/>
    <property type="match status" value="1"/>
</dbReference>
<dbReference type="CDD" id="cd16802">
    <property type="entry name" value="RING-H2_RNF128-like"/>
    <property type="match status" value="1"/>
</dbReference>
<dbReference type="FunFam" id="3.50.30.30:FF:000003">
    <property type="entry name" value="E3 ubiquitin-protein ligase RNF128"/>
    <property type="match status" value="1"/>
</dbReference>
<dbReference type="FunFam" id="3.30.40.10:FF:000009">
    <property type="entry name" value="E3 ubiquitin-protein ligase RNF130"/>
    <property type="match status" value="1"/>
</dbReference>
<dbReference type="Gene3D" id="3.50.30.30">
    <property type="match status" value="1"/>
</dbReference>
<dbReference type="Gene3D" id="3.30.40.10">
    <property type="entry name" value="Zinc/RING finger domain, C3HC4 (zinc finger)"/>
    <property type="match status" value="1"/>
</dbReference>
<dbReference type="InterPro" id="IPR046450">
    <property type="entry name" value="PA_dom_sf"/>
</dbReference>
<dbReference type="InterPro" id="IPR003137">
    <property type="entry name" value="PA_domain"/>
</dbReference>
<dbReference type="InterPro" id="IPR001841">
    <property type="entry name" value="Znf_RING"/>
</dbReference>
<dbReference type="InterPro" id="IPR013083">
    <property type="entry name" value="Znf_RING/FYVE/PHD"/>
</dbReference>
<dbReference type="InterPro" id="IPR051073">
    <property type="entry name" value="ZNRF3_Arkadia_E3_ligases"/>
</dbReference>
<dbReference type="PANTHER" id="PTHR16200">
    <property type="entry name" value="RING ZINC FINGER"/>
    <property type="match status" value="1"/>
</dbReference>
<dbReference type="Pfam" id="PF02225">
    <property type="entry name" value="PA"/>
    <property type="match status" value="1"/>
</dbReference>
<dbReference type="Pfam" id="PF13639">
    <property type="entry name" value="zf-RING_2"/>
    <property type="match status" value="1"/>
</dbReference>
<dbReference type="SMART" id="SM00184">
    <property type="entry name" value="RING"/>
    <property type="match status" value="1"/>
</dbReference>
<dbReference type="SUPFAM" id="SSF52025">
    <property type="entry name" value="PA domain"/>
    <property type="match status" value="1"/>
</dbReference>
<dbReference type="SUPFAM" id="SSF57850">
    <property type="entry name" value="RING/U-box"/>
    <property type="match status" value="1"/>
</dbReference>
<dbReference type="PROSITE" id="PS50089">
    <property type="entry name" value="ZF_RING_2"/>
    <property type="match status" value="1"/>
</dbReference>
<feature type="signal peptide" evidence="2">
    <location>
        <begin position="1"/>
        <end position="38"/>
    </location>
</feature>
<feature type="chain" id="PRO_0000261412" description="E3 ubiquitin-protein ligase RNF128">
    <location>
        <begin position="39"/>
        <end position="428"/>
    </location>
</feature>
<feature type="transmembrane region" description="Helical" evidence="2">
    <location>
        <begin position="208"/>
        <end position="228"/>
    </location>
</feature>
<feature type="domain" description="PA">
    <location>
        <begin position="75"/>
        <end position="183"/>
    </location>
</feature>
<feature type="zinc finger region" description="RING-type; atypical" evidence="3">
    <location>
        <begin position="277"/>
        <end position="318"/>
    </location>
</feature>
<feature type="region of interest" description="Disordered" evidence="4">
    <location>
        <begin position="346"/>
        <end position="428"/>
    </location>
</feature>
<feature type="compositionally biased region" description="Polar residues" evidence="4">
    <location>
        <begin position="360"/>
        <end position="371"/>
    </location>
</feature>
<feature type="glycosylation site" description="N-linked (GlcNAc...) asparagine" evidence="2">
    <location>
        <position position="48"/>
    </location>
</feature>
<feature type="glycosylation site" description="N-linked (GlcNAc...) asparagine" evidence="2">
    <location>
        <position position="59"/>
    </location>
</feature>
<feature type="glycosylation site" description="N-linked (GlcNAc...) asparagine" evidence="12">
    <location>
        <position position="101"/>
    </location>
</feature>
<feature type="splice variant" id="VSP_021685" description="In isoform 2." evidence="13">
    <original>MGPPPGAGVSCRGGCGFSRLLAWCFLLALSPQAPGSRGAEAVWTAYLNVSWRVPHTGVNRTVWELSEEGVYGQDSPLEPVAGVLVPPDGPGALNACNPHTNFTVPTVWGSTVQVSWLALIQRGGGCTFADKIHLAYERGASGAVIFNFPGTRNEVIPMSHP</original>
    <variation>MNQENRSSFFWLLVIFTFLLKITASFSMSAYVTVTYYNETSNYTAIETCECGVYGLASPVANAMGVVGIPKNNNYQACDHNTEFSNTKKPWIALIERGNCTFSEKIQTAGRRNADAVVIYNAPETGNQTIQMANF</variation>
    <location>
        <begin position="1"/>
        <end position="161"/>
    </location>
</feature>
<feature type="sequence conflict" description="In Ref. 1; AAK77554." evidence="14" ref="1">
    <original>P</original>
    <variation>L</variation>
    <location>
        <position position="4"/>
    </location>
</feature>
<feature type="sequence conflict" description="In Ref. 1; AAK77554." evidence="14" ref="1">
    <original>S</original>
    <variation>P</variation>
    <location>
        <position position="214"/>
    </location>
</feature>
<feature type="sequence conflict" description="In Ref. 1; AAK77554." evidence="14" ref="1">
    <original>V</original>
    <variation>G</variation>
    <location>
        <position position="223"/>
    </location>
</feature>
<feature type="sequence conflict" description="In Ref. 2; BAB15682." evidence="14" ref="2">
    <original>I</original>
    <variation>L</variation>
    <location>
        <position position="255"/>
    </location>
</feature>
<feature type="sequence conflict" description="In Ref. 4; AAH56677." evidence="14" ref="4">
    <original>R</original>
    <variation>G</variation>
    <location>
        <position position="257"/>
    </location>
</feature>
<feature type="sequence conflict" description="In Ref. 2; BAB15682." evidence="14" ref="2">
    <original>R</original>
    <variation>L</variation>
    <location>
        <position position="261"/>
    </location>
</feature>
<feature type="sequence conflict" description="In Ref. 2; BAB15682." evidence="14" ref="2">
    <original>V</original>
    <variation>A</variation>
    <location>
        <position position="336"/>
    </location>
</feature>
<feature type="strand" evidence="15">
    <location>
        <begin position="42"/>
        <end position="52"/>
    </location>
</feature>
<feature type="strand" evidence="15">
    <location>
        <begin position="61"/>
        <end position="71"/>
    </location>
</feature>
<feature type="strand" evidence="15">
    <location>
        <begin position="80"/>
        <end position="85"/>
    </location>
</feature>
<feature type="strand" evidence="15">
    <location>
        <begin position="116"/>
        <end position="122"/>
    </location>
</feature>
<feature type="helix" evidence="15">
    <location>
        <begin position="128"/>
        <end position="137"/>
    </location>
</feature>
<feature type="strand" evidence="15">
    <location>
        <begin position="141"/>
        <end position="146"/>
    </location>
</feature>
<feature type="strand" evidence="15">
    <location>
        <begin position="165"/>
        <end position="171"/>
    </location>
</feature>
<feature type="helix" evidence="15">
    <location>
        <begin position="173"/>
        <end position="184"/>
    </location>
</feature>
<feature type="strand" evidence="15">
    <location>
        <begin position="189"/>
        <end position="199"/>
    </location>
</feature>
<evidence type="ECO:0000250" key="1"/>
<evidence type="ECO:0000255" key="2"/>
<evidence type="ECO:0000255" key="3">
    <source>
        <dbReference type="PROSITE-ProRule" id="PRU00175"/>
    </source>
</evidence>
<evidence type="ECO:0000256" key="4">
    <source>
        <dbReference type="SAM" id="MobiDB-lite"/>
    </source>
</evidence>
<evidence type="ECO:0000269" key="5">
    <source>
    </source>
</evidence>
<evidence type="ECO:0000269" key="6">
    <source>
    </source>
</evidence>
<evidence type="ECO:0000269" key="7">
    <source>
    </source>
</evidence>
<evidence type="ECO:0000269" key="8">
    <source>
    </source>
</evidence>
<evidence type="ECO:0000269" key="9">
    <source>
    </source>
</evidence>
<evidence type="ECO:0000269" key="10">
    <source>
    </source>
</evidence>
<evidence type="ECO:0000269" key="11">
    <source>
    </source>
</evidence>
<evidence type="ECO:0000269" key="12">
    <source ref="12"/>
</evidence>
<evidence type="ECO:0000303" key="13">
    <source>
    </source>
</evidence>
<evidence type="ECO:0000305" key="14"/>
<evidence type="ECO:0007829" key="15">
    <source>
        <dbReference type="PDB" id="3ICU"/>
    </source>
</evidence>
<protein>
    <recommendedName>
        <fullName>E3 ubiquitin-protein ligase RNF128</fullName>
        <ecNumber evidence="5">2.3.2.27</ecNumber>
    </recommendedName>
    <alternativeName>
        <fullName>Gene related to anergy in lymphocytes protein</fullName>
        <shortName>GRAIL</shortName>
    </alternativeName>
    <alternativeName>
        <fullName>RING finger protein 128</fullName>
    </alternativeName>
    <alternativeName>
        <fullName evidence="14">RING-type E3 ubiquitin transferase RNF128</fullName>
    </alternativeName>
</protein>
<organism>
    <name type="scientific">Homo sapiens</name>
    <name type="common">Human</name>
    <dbReference type="NCBI Taxonomy" id="9606"/>
    <lineage>
        <taxon>Eukaryota</taxon>
        <taxon>Metazoa</taxon>
        <taxon>Chordata</taxon>
        <taxon>Craniata</taxon>
        <taxon>Vertebrata</taxon>
        <taxon>Euteleostomi</taxon>
        <taxon>Mammalia</taxon>
        <taxon>Eutheria</taxon>
        <taxon>Euarchontoglires</taxon>
        <taxon>Primates</taxon>
        <taxon>Haplorrhini</taxon>
        <taxon>Catarrhini</taxon>
        <taxon>Hominidae</taxon>
        <taxon>Homo</taxon>
    </lineage>
</organism>
<gene>
    <name type="primary">RNF128</name>
</gene>
<accession>Q8TEB7</accession>
<accession>A0PJI4</accession>
<accession>Q6PH80</accession>
<accession>Q6ZTJ8</accession>
<accession>Q96RF3</accession>
<accession>Q9H5E4</accession>
<proteinExistence type="evidence at protein level"/>